<organism>
    <name type="scientific">Leifsonia xyli subsp. xyli (strain CTCB07)</name>
    <dbReference type="NCBI Taxonomy" id="281090"/>
    <lineage>
        <taxon>Bacteria</taxon>
        <taxon>Bacillati</taxon>
        <taxon>Actinomycetota</taxon>
        <taxon>Actinomycetes</taxon>
        <taxon>Micrococcales</taxon>
        <taxon>Microbacteriaceae</taxon>
        <taxon>Leifsonia</taxon>
    </lineage>
</organism>
<proteinExistence type="inferred from homology"/>
<keyword id="KW-0067">ATP-binding</keyword>
<keyword id="KW-0436">Ligase</keyword>
<keyword id="KW-0547">Nucleotide-binding</keyword>
<keyword id="KW-0658">Purine biosynthesis</keyword>
<keyword id="KW-1185">Reference proteome</keyword>
<accession>Q6ACE5</accession>
<sequence length="299" mass="32944">MTEMPGWKHVYSGKVRDLFVPETAEGLTETDTVLVVASDRVSAFDHVLEPGIPGKGELLTALSLWWFDRLDAPNHLIPDHTLEGERARERIPAAVSGRSMLVKPLDMFPIECVVRGYLTGSGWQEYQESQSVCGLPLPAGLSDGDRLPEPIYTPAWKAPLGEHDENISYERTIELVGAETAGTLRELSLAVYGRGAAIAEKRGVIIADTKFEFGAERETGEITLADEVLTSDSSRYWDAAATSDVYTPKERMASFDKQIVRDWLAANWDRTGTPPALPAEIVERTAGRYRALVERLTGA</sequence>
<reference key="1">
    <citation type="journal article" date="2004" name="Mol. Plant Microbe Interact.">
        <title>The genome sequence of the Gram-positive sugarcane pathogen Leifsonia xyli subsp. xyli.</title>
        <authorList>
            <person name="Monteiro-Vitorello C.B."/>
            <person name="Camargo L.E.A."/>
            <person name="Van Sluys M.A."/>
            <person name="Kitajima J.P."/>
            <person name="Truffi D."/>
            <person name="do Amaral A.M."/>
            <person name="Harakava R."/>
            <person name="de Oliveira J.C.F."/>
            <person name="Wood D."/>
            <person name="de Oliveira M.C."/>
            <person name="Miyaki C.Y."/>
            <person name="Takita M.A."/>
            <person name="da Silva A.C.R."/>
            <person name="Furlan L.R."/>
            <person name="Carraro D.M."/>
            <person name="Camarotte G."/>
            <person name="Almeida N.F. Jr."/>
            <person name="Carrer H."/>
            <person name="Coutinho L.L."/>
            <person name="El-Dorry H.A."/>
            <person name="Ferro M.I.T."/>
            <person name="Gagliardi P.R."/>
            <person name="Giglioti E."/>
            <person name="Goldman M.H.S."/>
            <person name="Goldman G.H."/>
            <person name="Kimura E.T."/>
            <person name="Ferro E.S."/>
            <person name="Kuramae E.E."/>
            <person name="Lemos E.G.M."/>
            <person name="Lemos M.V.F."/>
            <person name="Mauro S.M.Z."/>
            <person name="Machado M.A."/>
            <person name="Marino C.L."/>
            <person name="Menck C.F."/>
            <person name="Nunes L.R."/>
            <person name="Oliveira R.C."/>
            <person name="Pereira G.G."/>
            <person name="Siqueira W."/>
            <person name="de Souza A.A."/>
            <person name="Tsai S.M."/>
            <person name="Zanca A.S."/>
            <person name="Simpson A.J.G."/>
            <person name="Brumbley S.M."/>
            <person name="Setubal J.C."/>
        </authorList>
    </citation>
    <scope>NUCLEOTIDE SEQUENCE [LARGE SCALE GENOMIC DNA]</scope>
    <source>
        <strain>CTCB07</strain>
    </source>
</reference>
<feature type="chain" id="PRO_0000100836" description="Phosphoribosylaminoimidazole-succinocarboxamide synthase">
    <location>
        <begin position="1"/>
        <end position="299"/>
    </location>
</feature>
<dbReference type="EC" id="6.3.2.6" evidence="1"/>
<dbReference type="EMBL" id="AE016822">
    <property type="protein sequence ID" value="AAT89948.1"/>
    <property type="molecule type" value="Genomic_DNA"/>
</dbReference>
<dbReference type="SMR" id="Q6ACE5"/>
<dbReference type="STRING" id="281090.Lxx22800"/>
<dbReference type="KEGG" id="lxx:Lxx22800"/>
<dbReference type="eggNOG" id="COG0152">
    <property type="taxonomic scope" value="Bacteria"/>
</dbReference>
<dbReference type="HOGENOM" id="CLU_045637_0_0_11"/>
<dbReference type="UniPathway" id="UPA00074">
    <property type="reaction ID" value="UER00131"/>
</dbReference>
<dbReference type="Proteomes" id="UP000001306">
    <property type="component" value="Chromosome"/>
</dbReference>
<dbReference type="GO" id="GO:0005737">
    <property type="term" value="C:cytoplasm"/>
    <property type="evidence" value="ECO:0007669"/>
    <property type="project" value="TreeGrafter"/>
</dbReference>
<dbReference type="GO" id="GO:0005524">
    <property type="term" value="F:ATP binding"/>
    <property type="evidence" value="ECO:0007669"/>
    <property type="project" value="UniProtKB-KW"/>
</dbReference>
<dbReference type="GO" id="GO:0004639">
    <property type="term" value="F:phosphoribosylaminoimidazolesuccinocarboxamide synthase activity"/>
    <property type="evidence" value="ECO:0007669"/>
    <property type="project" value="UniProtKB-UniRule"/>
</dbReference>
<dbReference type="GO" id="GO:0006189">
    <property type="term" value="P:'de novo' IMP biosynthetic process"/>
    <property type="evidence" value="ECO:0007669"/>
    <property type="project" value="UniProtKB-UniRule"/>
</dbReference>
<dbReference type="CDD" id="cd01414">
    <property type="entry name" value="SAICAR_synt_Sc"/>
    <property type="match status" value="1"/>
</dbReference>
<dbReference type="FunFam" id="3.30.470.20:FF:000015">
    <property type="entry name" value="Phosphoribosylaminoimidazole-succinocarboxamide synthase"/>
    <property type="match status" value="1"/>
</dbReference>
<dbReference type="Gene3D" id="3.30.470.20">
    <property type="entry name" value="ATP-grasp fold, B domain"/>
    <property type="match status" value="1"/>
</dbReference>
<dbReference type="Gene3D" id="3.30.200.20">
    <property type="entry name" value="Phosphorylase Kinase, domain 1"/>
    <property type="match status" value="1"/>
</dbReference>
<dbReference type="HAMAP" id="MF_00137">
    <property type="entry name" value="SAICAR_synth"/>
    <property type="match status" value="1"/>
</dbReference>
<dbReference type="InterPro" id="IPR028923">
    <property type="entry name" value="SAICAR_synt/ADE2_N"/>
</dbReference>
<dbReference type="InterPro" id="IPR001636">
    <property type="entry name" value="SAICAR_synth"/>
</dbReference>
<dbReference type="InterPro" id="IPR018236">
    <property type="entry name" value="SAICAR_synthetase_CS"/>
</dbReference>
<dbReference type="NCBIfam" id="NF010568">
    <property type="entry name" value="PRK13961.1"/>
    <property type="match status" value="1"/>
</dbReference>
<dbReference type="NCBIfam" id="TIGR00081">
    <property type="entry name" value="purC"/>
    <property type="match status" value="1"/>
</dbReference>
<dbReference type="PANTHER" id="PTHR43700">
    <property type="entry name" value="PHOSPHORIBOSYLAMINOIMIDAZOLE-SUCCINOCARBOXAMIDE SYNTHASE"/>
    <property type="match status" value="1"/>
</dbReference>
<dbReference type="PANTHER" id="PTHR43700:SF1">
    <property type="entry name" value="PHOSPHORIBOSYLAMINOIMIDAZOLE-SUCCINOCARBOXAMIDE SYNTHASE"/>
    <property type="match status" value="1"/>
</dbReference>
<dbReference type="Pfam" id="PF01259">
    <property type="entry name" value="SAICAR_synt"/>
    <property type="match status" value="1"/>
</dbReference>
<dbReference type="SUPFAM" id="SSF56104">
    <property type="entry name" value="SAICAR synthase-like"/>
    <property type="match status" value="1"/>
</dbReference>
<dbReference type="PROSITE" id="PS01057">
    <property type="entry name" value="SAICAR_SYNTHETASE_1"/>
    <property type="match status" value="1"/>
</dbReference>
<dbReference type="PROSITE" id="PS01058">
    <property type="entry name" value="SAICAR_SYNTHETASE_2"/>
    <property type="match status" value="1"/>
</dbReference>
<protein>
    <recommendedName>
        <fullName evidence="1">Phosphoribosylaminoimidazole-succinocarboxamide synthase</fullName>
        <ecNumber evidence="1">6.3.2.6</ecNumber>
    </recommendedName>
    <alternativeName>
        <fullName evidence="1">SAICAR synthetase</fullName>
    </alternativeName>
</protein>
<evidence type="ECO:0000255" key="1">
    <source>
        <dbReference type="HAMAP-Rule" id="MF_00137"/>
    </source>
</evidence>
<name>PUR7_LEIXX</name>
<comment type="catalytic activity">
    <reaction evidence="1">
        <text>5-amino-1-(5-phospho-D-ribosyl)imidazole-4-carboxylate + L-aspartate + ATP = (2S)-2-[5-amino-1-(5-phospho-beta-D-ribosyl)imidazole-4-carboxamido]succinate + ADP + phosphate + 2 H(+)</text>
        <dbReference type="Rhea" id="RHEA:22628"/>
        <dbReference type="ChEBI" id="CHEBI:15378"/>
        <dbReference type="ChEBI" id="CHEBI:29991"/>
        <dbReference type="ChEBI" id="CHEBI:30616"/>
        <dbReference type="ChEBI" id="CHEBI:43474"/>
        <dbReference type="ChEBI" id="CHEBI:58443"/>
        <dbReference type="ChEBI" id="CHEBI:77657"/>
        <dbReference type="ChEBI" id="CHEBI:456216"/>
        <dbReference type="EC" id="6.3.2.6"/>
    </reaction>
</comment>
<comment type="pathway">
    <text evidence="1">Purine metabolism; IMP biosynthesis via de novo pathway; 5-amino-1-(5-phospho-D-ribosyl)imidazole-4-carboxamide from 5-amino-1-(5-phospho-D-ribosyl)imidazole-4-carboxylate: step 1/2.</text>
</comment>
<comment type="similarity">
    <text evidence="1">Belongs to the SAICAR synthetase family.</text>
</comment>
<gene>
    <name evidence="1" type="primary">purC</name>
    <name type="ordered locus">Lxx22800</name>
</gene>